<protein>
    <recommendedName>
        <fullName>WAP four-disulfide core domain protein 5</fullName>
    </recommendedName>
</protein>
<gene>
    <name type="primary">WFDC5</name>
</gene>
<reference key="1">
    <citation type="journal article" date="2007" name="Genome Res.">
        <title>Comparative sequence analyses reveal rapid and divergent evolutionary changes of the WFDC locus in the primate lineage.</title>
        <authorList>
            <consortium name="NISC comparative sequencing program"/>
            <person name="Hurle B."/>
            <person name="Swanson W."/>
            <person name="Green E.D."/>
        </authorList>
    </citation>
    <scope>NUCLEOTIDE SEQUENCE [GENOMIC DNA]</scope>
</reference>
<comment type="function">
    <text evidence="1">Putative acid-stable proteinase inhibitor.</text>
</comment>
<comment type="subcellular location">
    <subcellularLocation>
        <location evidence="4">Secreted</location>
    </subcellularLocation>
</comment>
<organism>
    <name type="scientific">Lemur catta</name>
    <name type="common">Ring-tailed lemur</name>
    <dbReference type="NCBI Taxonomy" id="9447"/>
    <lineage>
        <taxon>Eukaryota</taxon>
        <taxon>Metazoa</taxon>
        <taxon>Chordata</taxon>
        <taxon>Craniata</taxon>
        <taxon>Vertebrata</taxon>
        <taxon>Euteleostomi</taxon>
        <taxon>Mammalia</taxon>
        <taxon>Eutheria</taxon>
        <taxon>Euarchontoglires</taxon>
        <taxon>Primates</taxon>
        <taxon>Strepsirrhini</taxon>
        <taxon>Lemuriformes</taxon>
        <taxon>Lemuridae</taxon>
        <taxon>Lemur</taxon>
    </lineage>
</organism>
<proteinExistence type="inferred from homology"/>
<keyword id="KW-1015">Disulfide bond</keyword>
<keyword id="KW-0646">Protease inhibitor</keyword>
<keyword id="KW-0677">Repeat</keyword>
<keyword id="KW-0964">Secreted</keyword>
<keyword id="KW-0722">Serine protease inhibitor</keyword>
<keyword id="KW-0732">Signal</keyword>
<dbReference type="EMBL" id="DP000042">
    <property type="protein sequence ID" value="ABO52958.1"/>
    <property type="molecule type" value="Genomic_DNA"/>
</dbReference>
<dbReference type="RefSeq" id="XP_045385102.1">
    <property type="nucleotide sequence ID" value="XM_045529146.1"/>
</dbReference>
<dbReference type="SMR" id="A4K2S3"/>
<dbReference type="GeneID" id="123622629"/>
<dbReference type="OrthoDB" id="4473401at2759"/>
<dbReference type="GO" id="GO:0005576">
    <property type="term" value="C:extracellular region"/>
    <property type="evidence" value="ECO:0007669"/>
    <property type="project" value="UniProtKB-SubCell"/>
</dbReference>
<dbReference type="GO" id="GO:0004867">
    <property type="term" value="F:serine-type endopeptidase inhibitor activity"/>
    <property type="evidence" value="ECO:0007669"/>
    <property type="project" value="UniProtKB-KW"/>
</dbReference>
<dbReference type="Gene3D" id="4.10.75.10">
    <property type="entry name" value="Elafin-like"/>
    <property type="match status" value="2"/>
</dbReference>
<dbReference type="InterPro" id="IPR036645">
    <property type="entry name" value="Elafin-like_sf"/>
</dbReference>
<dbReference type="InterPro" id="IPR008197">
    <property type="entry name" value="WAP_dom"/>
</dbReference>
<dbReference type="PANTHER" id="PTHR47769">
    <property type="entry name" value="WAP FOUR-DISULFIDE CORE DOMAIN PROTEIN 8"/>
    <property type="match status" value="1"/>
</dbReference>
<dbReference type="PANTHER" id="PTHR47769:SF1">
    <property type="entry name" value="WAP FOUR-DISULFIDE CORE DOMAIN PROTEIN 8"/>
    <property type="match status" value="1"/>
</dbReference>
<dbReference type="Pfam" id="PF00095">
    <property type="entry name" value="WAP"/>
    <property type="match status" value="2"/>
</dbReference>
<dbReference type="PRINTS" id="PR00003">
    <property type="entry name" value="4DISULPHCORE"/>
</dbReference>
<dbReference type="SMART" id="SM00217">
    <property type="entry name" value="WAP"/>
    <property type="match status" value="2"/>
</dbReference>
<dbReference type="SUPFAM" id="SSF57256">
    <property type="entry name" value="Elafin-like"/>
    <property type="match status" value="2"/>
</dbReference>
<dbReference type="PROSITE" id="PS51390">
    <property type="entry name" value="WAP"/>
    <property type="match status" value="2"/>
</dbReference>
<feature type="signal peptide" evidence="2">
    <location>
        <begin position="1"/>
        <end position="24"/>
    </location>
</feature>
<feature type="chain" id="PRO_0000289638" description="WAP four-disulfide core domain protein 5">
    <location>
        <begin position="25"/>
        <end position="123"/>
    </location>
</feature>
<feature type="domain" description="WAP 1" evidence="3">
    <location>
        <begin position="27"/>
        <end position="74"/>
    </location>
</feature>
<feature type="domain" description="WAP 2" evidence="3">
    <location>
        <begin position="75"/>
        <end position="121"/>
    </location>
</feature>
<feature type="disulfide bond" evidence="3">
    <location>
        <begin position="34"/>
        <end position="62"/>
    </location>
</feature>
<feature type="disulfide bond" evidence="3">
    <location>
        <begin position="41"/>
        <end position="66"/>
    </location>
</feature>
<feature type="disulfide bond" evidence="3">
    <location>
        <begin position="49"/>
        <end position="61"/>
    </location>
</feature>
<feature type="disulfide bond" evidence="3">
    <location>
        <begin position="55"/>
        <end position="70"/>
    </location>
</feature>
<feature type="disulfide bond" evidence="3">
    <location>
        <begin position="81"/>
        <end position="109"/>
    </location>
</feature>
<feature type="disulfide bond" evidence="3">
    <location>
        <begin position="88"/>
        <end position="113"/>
    </location>
</feature>
<feature type="disulfide bond" evidence="3">
    <location>
        <begin position="96"/>
        <end position="108"/>
    </location>
</feature>
<feature type="disulfide bond" evidence="3">
    <location>
        <begin position="102"/>
        <end position="117"/>
    </location>
</feature>
<name>WFDC5_LEMCA</name>
<sequence>MRFWSLFLLVVLLAVGGQLPAASGRKKGERAGACPPEDGPCVISVPDQCQEDSQCPSTMKCCFQACFRHCVPRILVKRGGCPEDQLQCLSPTEHLCNKDSDCSGKKRCCHTSCGRECRDPARG</sequence>
<evidence type="ECO:0000250" key="1"/>
<evidence type="ECO:0000255" key="2"/>
<evidence type="ECO:0000255" key="3">
    <source>
        <dbReference type="PROSITE-ProRule" id="PRU00722"/>
    </source>
</evidence>
<evidence type="ECO:0000305" key="4"/>
<accession>A4K2S3</accession>